<name>AROQ_CAMJD</name>
<protein>
    <recommendedName>
        <fullName evidence="1">3-dehydroquinate dehydratase</fullName>
        <shortName evidence="1">3-dehydroquinase</shortName>
        <ecNumber evidence="1">4.2.1.10</ecNumber>
    </recommendedName>
    <alternativeName>
        <fullName evidence="1">Type II DHQase</fullName>
    </alternativeName>
</protein>
<organism>
    <name type="scientific">Campylobacter jejuni subsp. doylei (strain ATCC BAA-1458 / RM4099 / 269.97)</name>
    <dbReference type="NCBI Taxonomy" id="360109"/>
    <lineage>
        <taxon>Bacteria</taxon>
        <taxon>Pseudomonadati</taxon>
        <taxon>Campylobacterota</taxon>
        <taxon>Epsilonproteobacteria</taxon>
        <taxon>Campylobacterales</taxon>
        <taxon>Campylobacteraceae</taxon>
        <taxon>Campylobacter</taxon>
    </lineage>
</organism>
<gene>
    <name evidence="1" type="primary">aroQ</name>
    <name type="ordered locus">JJD26997_0076</name>
</gene>
<keyword id="KW-0028">Amino-acid biosynthesis</keyword>
<keyword id="KW-0057">Aromatic amino acid biosynthesis</keyword>
<keyword id="KW-0456">Lyase</keyword>
<dbReference type="EC" id="4.2.1.10" evidence="1"/>
<dbReference type="EMBL" id="CP000768">
    <property type="protein sequence ID" value="ABS44762.1"/>
    <property type="molecule type" value="Genomic_DNA"/>
</dbReference>
<dbReference type="SMR" id="A7H1F1"/>
<dbReference type="KEGG" id="cjd:JJD26997_0076"/>
<dbReference type="HOGENOM" id="CLU_090968_2_0_7"/>
<dbReference type="UniPathway" id="UPA00053">
    <property type="reaction ID" value="UER00086"/>
</dbReference>
<dbReference type="Proteomes" id="UP000002302">
    <property type="component" value="Chromosome"/>
</dbReference>
<dbReference type="GO" id="GO:0003855">
    <property type="term" value="F:3-dehydroquinate dehydratase activity"/>
    <property type="evidence" value="ECO:0007669"/>
    <property type="project" value="UniProtKB-UniRule"/>
</dbReference>
<dbReference type="GO" id="GO:0008652">
    <property type="term" value="P:amino acid biosynthetic process"/>
    <property type="evidence" value="ECO:0007669"/>
    <property type="project" value="UniProtKB-KW"/>
</dbReference>
<dbReference type="GO" id="GO:0009073">
    <property type="term" value="P:aromatic amino acid family biosynthetic process"/>
    <property type="evidence" value="ECO:0007669"/>
    <property type="project" value="UniProtKB-KW"/>
</dbReference>
<dbReference type="GO" id="GO:0009423">
    <property type="term" value="P:chorismate biosynthetic process"/>
    <property type="evidence" value="ECO:0007669"/>
    <property type="project" value="UniProtKB-UniRule"/>
</dbReference>
<dbReference type="GO" id="GO:0019631">
    <property type="term" value="P:quinate catabolic process"/>
    <property type="evidence" value="ECO:0007669"/>
    <property type="project" value="TreeGrafter"/>
</dbReference>
<dbReference type="CDD" id="cd00466">
    <property type="entry name" value="DHQase_II"/>
    <property type="match status" value="1"/>
</dbReference>
<dbReference type="Gene3D" id="3.40.50.9100">
    <property type="entry name" value="Dehydroquinase, class II"/>
    <property type="match status" value="1"/>
</dbReference>
<dbReference type="HAMAP" id="MF_00169">
    <property type="entry name" value="AroQ"/>
    <property type="match status" value="1"/>
</dbReference>
<dbReference type="InterPro" id="IPR001874">
    <property type="entry name" value="DHquinase_II"/>
</dbReference>
<dbReference type="InterPro" id="IPR018509">
    <property type="entry name" value="DHquinase_II_CS"/>
</dbReference>
<dbReference type="InterPro" id="IPR036441">
    <property type="entry name" value="DHquinase_II_sf"/>
</dbReference>
<dbReference type="NCBIfam" id="TIGR01088">
    <property type="entry name" value="aroQ"/>
    <property type="match status" value="1"/>
</dbReference>
<dbReference type="NCBIfam" id="NF003805">
    <property type="entry name" value="PRK05395.1-2"/>
    <property type="match status" value="1"/>
</dbReference>
<dbReference type="NCBIfam" id="NF003806">
    <property type="entry name" value="PRK05395.1-3"/>
    <property type="match status" value="1"/>
</dbReference>
<dbReference type="NCBIfam" id="NF003807">
    <property type="entry name" value="PRK05395.1-4"/>
    <property type="match status" value="1"/>
</dbReference>
<dbReference type="PANTHER" id="PTHR21272">
    <property type="entry name" value="CATABOLIC 3-DEHYDROQUINASE"/>
    <property type="match status" value="1"/>
</dbReference>
<dbReference type="PANTHER" id="PTHR21272:SF3">
    <property type="entry name" value="CATABOLIC 3-DEHYDROQUINASE"/>
    <property type="match status" value="1"/>
</dbReference>
<dbReference type="Pfam" id="PF01220">
    <property type="entry name" value="DHquinase_II"/>
    <property type="match status" value="1"/>
</dbReference>
<dbReference type="PIRSF" id="PIRSF001399">
    <property type="entry name" value="DHquinase_II"/>
    <property type="match status" value="1"/>
</dbReference>
<dbReference type="SUPFAM" id="SSF52304">
    <property type="entry name" value="Type II 3-dehydroquinate dehydratase"/>
    <property type="match status" value="1"/>
</dbReference>
<dbReference type="PROSITE" id="PS01029">
    <property type="entry name" value="DEHYDROQUINASE_II"/>
    <property type="match status" value="1"/>
</dbReference>
<reference key="1">
    <citation type="submission" date="2007-07" db="EMBL/GenBank/DDBJ databases">
        <title>Complete genome sequence of Campylobacter jejuni subsp doylei 269.97 isolated from human blood.</title>
        <authorList>
            <person name="Fouts D.E."/>
            <person name="Mongodin E.F."/>
            <person name="Puiu D."/>
            <person name="Sebastian Y."/>
            <person name="Miller W.G."/>
            <person name="Mandrell R.E."/>
            <person name="Lastovica A.J."/>
            <person name="Nelson K.E."/>
        </authorList>
    </citation>
    <scope>NUCLEOTIDE SEQUENCE [LARGE SCALE GENOMIC DNA]</scope>
    <source>
        <strain>ATCC BAA-1458 / RM4099 / 269.97</strain>
    </source>
</reference>
<feature type="chain" id="PRO_1000023457" description="3-dehydroquinate dehydratase">
    <location>
        <begin position="1"/>
        <end position="159"/>
    </location>
</feature>
<feature type="active site" description="Proton acceptor" evidence="1">
    <location>
        <position position="22"/>
    </location>
</feature>
<feature type="active site" description="Proton donor" evidence="1">
    <location>
        <position position="99"/>
    </location>
</feature>
<feature type="binding site" evidence="1">
    <location>
        <position position="73"/>
    </location>
    <ligand>
        <name>substrate</name>
    </ligand>
</feature>
<feature type="binding site" evidence="1">
    <location>
        <position position="79"/>
    </location>
    <ligand>
        <name>substrate</name>
    </ligand>
</feature>
<feature type="binding site" evidence="1">
    <location>
        <position position="86"/>
    </location>
    <ligand>
        <name>substrate</name>
    </ligand>
</feature>
<feature type="binding site" evidence="1">
    <location>
        <begin position="100"/>
        <end position="101"/>
    </location>
    <ligand>
        <name>substrate</name>
    </ligand>
</feature>
<feature type="binding site" evidence="1">
    <location>
        <position position="110"/>
    </location>
    <ligand>
        <name>substrate</name>
    </ligand>
</feature>
<feature type="site" description="Transition state stabilizer" evidence="1">
    <location>
        <position position="17"/>
    </location>
</feature>
<accession>A7H1F1</accession>
<evidence type="ECO:0000255" key="1">
    <source>
        <dbReference type="HAMAP-Rule" id="MF_00169"/>
    </source>
</evidence>
<comment type="function">
    <text evidence="1">Catalyzes a trans-dehydration via an enolate intermediate.</text>
</comment>
<comment type="catalytic activity">
    <reaction evidence="1">
        <text>3-dehydroquinate = 3-dehydroshikimate + H2O</text>
        <dbReference type="Rhea" id="RHEA:21096"/>
        <dbReference type="ChEBI" id="CHEBI:15377"/>
        <dbReference type="ChEBI" id="CHEBI:16630"/>
        <dbReference type="ChEBI" id="CHEBI:32364"/>
        <dbReference type="EC" id="4.2.1.10"/>
    </reaction>
</comment>
<comment type="pathway">
    <text evidence="1">Metabolic intermediate biosynthesis; chorismate biosynthesis; chorismate from D-erythrose 4-phosphate and phosphoenolpyruvate: step 3/7.</text>
</comment>
<comment type="subunit">
    <text evidence="1">Homododecamer.</text>
</comment>
<comment type="similarity">
    <text evidence="1">Belongs to the type-II 3-dehydroquinase family.</text>
</comment>
<proteinExistence type="inferred from homology"/>
<sequence>MKIMIIQGPNVNMLGVREVGIYGAMKMEEIHEQMKLAASQNNVELDFFQSNFEGEIVDKIQECLGTVDGIIINAAGYTHTSVAIRDAIAAVALPTIEVHISNVYRREEFRQKNLIAPVCSGTIVGFGPFGYHLALMGIIQICEQIKNLRAMQQAQQTNK</sequence>